<dbReference type="EMBL" id="U21487">
    <property type="protein sequence ID" value="AAA96949.1"/>
    <property type="molecule type" value="Genomic_DNA"/>
</dbReference>
<dbReference type="EMBL" id="L41729">
    <property type="protein sequence ID" value="AAC41575.1"/>
    <property type="molecule type" value="mRNA"/>
</dbReference>
<dbReference type="EMBL" id="Z73969">
    <property type="protein sequence ID" value="CAA98241.1"/>
    <property type="molecule type" value="Genomic_DNA"/>
</dbReference>
<dbReference type="EMBL" id="AL021479">
    <property type="protein sequence ID" value="CAA98241.1"/>
    <property type="status" value="JOINED"/>
    <property type="molecule type" value="Genomic_DNA"/>
</dbReference>
<dbReference type="PIR" id="T19225">
    <property type="entry name" value="T19225"/>
</dbReference>
<dbReference type="RefSeq" id="NP_505638.1">
    <property type="nucleotide sequence ID" value="NM_073237.9"/>
</dbReference>
<dbReference type="SMR" id="Q27274"/>
<dbReference type="BioGRID" id="44455">
    <property type="interactions" value="17"/>
</dbReference>
<dbReference type="FunCoup" id="Q27274">
    <property type="interactions" value="2321"/>
</dbReference>
<dbReference type="IntAct" id="Q27274">
    <property type="interactions" value="1"/>
</dbReference>
<dbReference type="STRING" id="6239.C12D8.11.2"/>
<dbReference type="iPTMnet" id="Q27274"/>
<dbReference type="PaxDb" id="6239-C12D8.11"/>
<dbReference type="PeptideAtlas" id="Q27274"/>
<dbReference type="EnsemblMetazoa" id="C12D8.11.1">
    <property type="protein sequence ID" value="C12D8.11.1"/>
    <property type="gene ID" value="WBGene00004405"/>
</dbReference>
<dbReference type="GeneID" id="179425"/>
<dbReference type="KEGG" id="cel:CELE_C12D8.11"/>
<dbReference type="UCSC" id="C12D8.11.1">
    <property type="organism name" value="c. elegans"/>
</dbReference>
<dbReference type="AGR" id="WB:WBGene00004405"/>
<dbReference type="CTD" id="179425"/>
<dbReference type="WormBase" id="C12D8.11">
    <property type="protein sequence ID" value="CE15613"/>
    <property type="gene ID" value="WBGene00004405"/>
    <property type="gene designation" value="rop-1"/>
</dbReference>
<dbReference type="eggNOG" id="KOG4465">
    <property type="taxonomic scope" value="Eukaryota"/>
</dbReference>
<dbReference type="GeneTree" id="ENSGT00390000006200"/>
<dbReference type="HOGENOM" id="CLU_024421_1_0_1"/>
<dbReference type="InParanoid" id="Q27274"/>
<dbReference type="OMA" id="WWYEWLK"/>
<dbReference type="OrthoDB" id="6098064at2759"/>
<dbReference type="PhylomeDB" id="Q27274"/>
<dbReference type="SignaLink" id="Q27274"/>
<dbReference type="PRO" id="PR:Q27274"/>
<dbReference type="Proteomes" id="UP000001940">
    <property type="component" value="Chromosome V"/>
</dbReference>
<dbReference type="Bgee" id="WBGene00004405">
    <property type="expression patterns" value="Expressed in germ line (C elegans) and 4 other cell types or tissues"/>
</dbReference>
<dbReference type="GO" id="GO:0005737">
    <property type="term" value="C:cytoplasm"/>
    <property type="evidence" value="ECO:0007669"/>
    <property type="project" value="UniProtKB-SubCell"/>
</dbReference>
<dbReference type="GO" id="GO:1990904">
    <property type="term" value="C:ribonucleoprotein complex"/>
    <property type="evidence" value="ECO:0000318"/>
    <property type="project" value="GO_Central"/>
</dbReference>
<dbReference type="GO" id="GO:0046872">
    <property type="term" value="F:metal ion binding"/>
    <property type="evidence" value="ECO:0007669"/>
    <property type="project" value="UniProtKB-KW"/>
</dbReference>
<dbReference type="GO" id="GO:0003723">
    <property type="term" value="F:RNA binding"/>
    <property type="evidence" value="ECO:0000318"/>
    <property type="project" value="GO_Central"/>
</dbReference>
<dbReference type="FunFam" id="3.40.50.410:FF:000127">
    <property type="entry name" value="60 kDa SS-A/Ro ribonucleoprotein homolog"/>
    <property type="match status" value="1"/>
</dbReference>
<dbReference type="Gene3D" id="3.40.50.410">
    <property type="entry name" value="von Willebrand factor, type A domain"/>
    <property type="match status" value="2"/>
</dbReference>
<dbReference type="InterPro" id="IPR040322">
    <property type="entry name" value="TROVE2"/>
</dbReference>
<dbReference type="InterPro" id="IPR008858">
    <property type="entry name" value="TROVE_dom"/>
</dbReference>
<dbReference type="InterPro" id="IPR037214">
    <property type="entry name" value="TROVE_dom_sf"/>
</dbReference>
<dbReference type="InterPro" id="IPR056800">
    <property type="entry name" value="vWA_Ro60"/>
</dbReference>
<dbReference type="InterPro" id="IPR036465">
    <property type="entry name" value="vWFA_dom_sf"/>
</dbReference>
<dbReference type="PANTHER" id="PTHR14202">
    <property type="entry name" value="60 KDA RIBONUCLEOPROTEIN SSA/RO"/>
    <property type="match status" value="1"/>
</dbReference>
<dbReference type="PANTHER" id="PTHR14202:SF0">
    <property type="entry name" value="RNA-BINDING PROTEIN RO60"/>
    <property type="match status" value="1"/>
</dbReference>
<dbReference type="Pfam" id="PF05731">
    <property type="entry name" value="TROVE"/>
    <property type="match status" value="1"/>
</dbReference>
<dbReference type="Pfam" id="PF25045">
    <property type="entry name" value="vWA_Ro60"/>
    <property type="match status" value="1"/>
</dbReference>
<dbReference type="SUPFAM" id="SSF140864">
    <property type="entry name" value="TROVE domain-like"/>
    <property type="match status" value="1"/>
</dbReference>
<dbReference type="SUPFAM" id="SSF53300">
    <property type="entry name" value="vWA-like"/>
    <property type="match status" value="1"/>
</dbReference>
<dbReference type="PROSITE" id="PS50988">
    <property type="entry name" value="TROVE"/>
    <property type="match status" value="1"/>
</dbReference>
<evidence type="ECO:0000250" key="1">
    <source>
        <dbReference type="UniProtKB" id="P10155"/>
    </source>
</evidence>
<evidence type="ECO:0000250" key="2">
    <source>
        <dbReference type="UniProtKB" id="P42700"/>
    </source>
</evidence>
<evidence type="ECO:0000255" key="3">
    <source>
        <dbReference type="PROSITE-ProRule" id="PRU00343"/>
    </source>
</evidence>
<evidence type="ECO:0000305" key="4"/>
<evidence type="ECO:0000312" key="5">
    <source>
        <dbReference type="WormBase" id="C12D8.11"/>
    </source>
</evidence>
<keyword id="KW-0963">Cytoplasm</keyword>
<keyword id="KW-0479">Metal-binding</keyword>
<keyword id="KW-1185">Reference proteome</keyword>
<keyword id="KW-0677">Repeat</keyword>
<keyword id="KW-0687">Ribonucleoprotein</keyword>
<keyword id="KW-0694">RNA-binding</keyword>
<proteinExistence type="evidence at transcript level"/>
<organism>
    <name type="scientific">Caenorhabditis elegans</name>
    <dbReference type="NCBI Taxonomy" id="6239"/>
    <lineage>
        <taxon>Eukaryota</taxon>
        <taxon>Metazoa</taxon>
        <taxon>Ecdysozoa</taxon>
        <taxon>Nematoda</taxon>
        <taxon>Chromadorea</taxon>
        <taxon>Rhabditida</taxon>
        <taxon>Rhabditina</taxon>
        <taxon>Rhabditomorpha</taxon>
        <taxon>Rhabditoidea</taxon>
        <taxon>Rhabditidae</taxon>
        <taxon>Peloderinae</taxon>
        <taxon>Caenorhabditis</taxon>
    </lineage>
</organism>
<protein>
    <recommendedName>
        <fullName evidence="1">RNA-binding protein RO60</fullName>
    </recommendedName>
    <alternativeName>
        <fullName evidence="4">60 kDa SS-A/Ro ribonucleoprotein homolog</fullName>
    </alternativeName>
</protein>
<feature type="chain" id="PRO_0000174172" description="RNA-binding protein RO60">
    <location>
        <begin position="1"/>
        <end position="643"/>
    </location>
</feature>
<feature type="domain" description="TROVE" evidence="3">
    <location>
        <begin position="63"/>
        <end position="473"/>
    </location>
</feature>
<feature type="region of interest" description="RNA-binding" evidence="2">
    <location>
        <begin position="186"/>
        <end position="390"/>
    </location>
</feature>
<feature type="region of interest" description="VWFA-like domain" evidence="2">
    <location>
        <begin position="465"/>
        <end position="643"/>
    </location>
</feature>
<feature type="binding site" evidence="2">
    <location>
        <position position="482"/>
    </location>
    <ligand>
        <name>a divalent metal cation</name>
        <dbReference type="ChEBI" id="CHEBI:60240"/>
    </ligand>
</feature>
<feature type="binding site" evidence="2">
    <location>
        <position position="484"/>
    </location>
    <ligand>
        <name>a divalent metal cation</name>
        <dbReference type="ChEBI" id="CHEBI:60240"/>
    </ligand>
</feature>
<feature type="binding site" evidence="2">
    <location>
        <position position="549"/>
    </location>
    <ligand>
        <name>a divalent metal cation</name>
        <dbReference type="ChEBI" id="CHEBI:60240"/>
    </ligand>
</feature>
<reference key="1">
    <citation type="journal article" date="1995" name="Gene">
        <title>The Caenorhabditis elegans rop-1 gene encodes the homologue of the human 60-kDa Ro autoantigen.</title>
        <authorList>
            <person name="Labbe J.C."/>
            <person name="Jannatipour M."/>
            <person name="Rokeach L.A."/>
        </authorList>
    </citation>
    <scope>NUCLEOTIDE SEQUENCE [GENOMIC DNA]</scope>
    <source>
        <strain>Bristol N2</strain>
    </source>
</reference>
<reference key="2">
    <citation type="journal article" date="1995" name="RNA">
        <title>Caenorhabditis elegans embryos contain only one major species of Ro RNP.</title>
        <authorList>
            <person name="Van Horn D.J."/>
            <person name="Eisenberg D."/>
            <person name="O'Brien C.A."/>
            <person name="Wolin S.L."/>
        </authorList>
    </citation>
    <scope>NUCLEOTIDE SEQUENCE [MRNA]</scope>
</reference>
<reference key="3">
    <citation type="journal article" date="1998" name="Science">
        <title>Genome sequence of the nematode C. elegans: a platform for investigating biology.</title>
        <authorList>
            <consortium name="The C. elegans sequencing consortium"/>
        </authorList>
    </citation>
    <scope>NUCLEOTIDE SEQUENCE [LARGE SCALE GENOMIC DNA]</scope>
    <source>
        <strain>Bristol N2</strain>
    </source>
</reference>
<sequence>MADELNEFQEAGNFNEEALMRLSNVCARLRRMQMLESDVEITVVDGELKRVPRQMEKVKDGQVENNAGGFVFPVSDETQVRRFLILGSDKGSYHQSSEKITIDNAQRIIKIIEQGNGHMVLKELALINAENRNPKMNAMIFTLAICARISTHDTTKKTECPMLNAYSDYIRALHDSALDLIPEVCRTPTHLFEFVDYCQTISESTKAGGAKSSTGWGRSMRNAISKWYTTKTTEKLAMLLTKYPQREGWSHRDLFRLAHPNLMDSRSHGQSEDRLEREQLFRFAVKGDLVKRKRKMSVEEVAEVEKVWDKKALKLPYTEEQLIKEEQSRALNLVEAYLKLKNEQSEEVIVAAIKKHGLVREHLPTTSLNSKLVWETLFDVSMPMTAMIRNLAKMTVVGALDEKRVDNIVKRLTDQEELRRSRIHPINLLTARAVYAQGRGDKGSLTWEPNQKICDALEAGFYKAFVNAPPTGKRYCLALDVSGSMTSRVSSSPLSCREAATGMSLINLHNEAEVRCVAFCDKLTELPFTKDWKIGQVNDYVNNLDFGRTDCGLPMTWATENNLKFDVFIIYTDNDTWAGEIHPFEAIKKYREASGIHDAKVIVMAMQAYDYSIADPSDAGMLDITGFDSAVPQIVHEFVTGKI</sequence>
<name>RO60_CAEEL</name>
<gene>
    <name evidence="5" type="primary">rop-1</name>
    <name evidence="5" type="ORF">C12D8.11</name>
</gene>
<accession>Q27274</accession>
<accession>Q17933</accession>
<comment type="function">
    <text evidence="2">RNA-binding protein that binds to misfolded non-coding RNAs, pre-5S rRNA, and several small cytoplasmic RNA molecules known as Y RNAs.</text>
</comment>
<comment type="subcellular location">
    <subcellularLocation>
        <location evidence="1">Cytoplasm</location>
    </subcellularLocation>
</comment>
<comment type="domain">
    <text evidence="2">The horseshoe-shaped TROVE domain is built with 7 helical HEAT-like repeats, and is closed by the VWFA-like domain giving rise to a ring-shaped monomer. Single-stranded RNA is bound in the positively charged central cavity (By similarity).</text>
</comment>
<comment type="domain">
    <text evidence="2">The MIDAS-like motif in the VWFA-like domain binds divalent metal cations.</text>
</comment>
<comment type="similarity">
    <text evidence="4">Belongs to the Ro 60 kDa family.</text>
</comment>